<protein>
    <recommendedName>
        <fullName evidence="1">Triosephosphate isomerase</fullName>
        <shortName evidence="1">TIM</shortName>
        <shortName evidence="1">TPI</shortName>
        <ecNumber evidence="1">5.3.1.1</ecNumber>
    </recommendedName>
    <alternativeName>
        <fullName evidence="1">Triose-phosphate isomerase</fullName>
    </alternativeName>
</protein>
<gene>
    <name evidence="1" type="primary">tpiA</name>
    <name type="ordered locus">SACE_2145</name>
</gene>
<feature type="chain" id="PRO_0000307549" description="Triosephosphate isomerase">
    <location>
        <begin position="1"/>
        <end position="261"/>
    </location>
</feature>
<feature type="active site" description="Electrophile" evidence="1">
    <location>
        <position position="100"/>
    </location>
</feature>
<feature type="active site" description="Proton acceptor" evidence="1">
    <location>
        <position position="172"/>
    </location>
</feature>
<feature type="binding site" evidence="1">
    <location>
        <begin position="10"/>
        <end position="12"/>
    </location>
    <ligand>
        <name>substrate</name>
    </ligand>
</feature>
<feature type="binding site" evidence="1">
    <location>
        <position position="178"/>
    </location>
    <ligand>
        <name>substrate</name>
    </ligand>
</feature>
<feature type="binding site" evidence="1">
    <location>
        <position position="218"/>
    </location>
    <ligand>
        <name>substrate</name>
    </ligand>
</feature>
<feature type="binding site" evidence="1">
    <location>
        <begin position="239"/>
        <end position="240"/>
    </location>
    <ligand>
        <name>substrate</name>
    </ligand>
</feature>
<evidence type="ECO:0000255" key="1">
    <source>
        <dbReference type="HAMAP-Rule" id="MF_00147"/>
    </source>
</evidence>
<proteinExistence type="inferred from homology"/>
<organism>
    <name type="scientific">Saccharopolyspora erythraea (strain ATCC 11635 / DSM 40517 / JCM 4748 / NBRC 13426 / NCIMB 8594 / NRRL 2338)</name>
    <dbReference type="NCBI Taxonomy" id="405948"/>
    <lineage>
        <taxon>Bacteria</taxon>
        <taxon>Bacillati</taxon>
        <taxon>Actinomycetota</taxon>
        <taxon>Actinomycetes</taxon>
        <taxon>Pseudonocardiales</taxon>
        <taxon>Pseudonocardiaceae</taxon>
        <taxon>Saccharopolyspora</taxon>
    </lineage>
</organism>
<name>TPIS_SACEN</name>
<reference key="1">
    <citation type="journal article" date="2007" name="Nat. Biotechnol.">
        <title>Complete genome sequence of the erythromycin-producing bacterium Saccharopolyspora erythraea NRRL23338.</title>
        <authorList>
            <person name="Oliynyk M."/>
            <person name="Samborskyy M."/>
            <person name="Lester J.B."/>
            <person name="Mironenko T."/>
            <person name="Scott N."/>
            <person name="Dickens S."/>
            <person name="Haydock S.F."/>
            <person name="Leadlay P.F."/>
        </authorList>
    </citation>
    <scope>NUCLEOTIDE SEQUENCE [LARGE SCALE GENOMIC DNA]</scope>
    <source>
        <strain>ATCC 11635 / DSM 40517 / JCM 4748 / NBRC 13426 / NCIMB 8594 / NRRL 2338</strain>
    </source>
</reference>
<comment type="function">
    <text evidence="1">Involved in the gluconeogenesis. Catalyzes stereospecifically the conversion of dihydroxyacetone phosphate (DHAP) to D-glyceraldehyde-3-phosphate (G3P).</text>
</comment>
<comment type="catalytic activity">
    <reaction evidence="1">
        <text>D-glyceraldehyde 3-phosphate = dihydroxyacetone phosphate</text>
        <dbReference type="Rhea" id="RHEA:18585"/>
        <dbReference type="ChEBI" id="CHEBI:57642"/>
        <dbReference type="ChEBI" id="CHEBI:59776"/>
        <dbReference type="EC" id="5.3.1.1"/>
    </reaction>
</comment>
<comment type="pathway">
    <text evidence="1">Carbohydrate biosynthesis; gluconeogenesis.</text>
</comment>
<comment type="pathway">
    <text evidence="1">Carbohydrate degradation; glycolysis; D-glyceraldehyde 3-phosphate from glycerone phosphate: step 1/1.</text>
</comment>
<comment type="subunit">
    <text evidence="1">Homodimer.</text>
</comment>
<comment type="subcellular location">
    <subcellularLocation>
        <location evidence="1">Cytoplasm</location>
    </subcellularLocation>
</comment>
<comment type="similarity">
    <text evidence="1">Belongs to the triosephosphate isomerase family.</text>
</comment>
<dbReference type="EC" id="5.3.1.1" evidence="1"/>
<dbReference type="EMBL" id="AM420293">
    <property type="protein sequence ID" value="CAM01451.1"/>
    <property type="molecule type" value="Genomic_DNA"/>
</dbReference>
<dbReference type="RefSeq" id="WP_009942975.1">
    <property type="nucleotide sequence ID" value="NC_009142.1"/>
</dbReference>
<dbReference type="SMR" id="A4FBM6"/>
<dbReference type="STRING" id="405948.SACE_2145"/>
<dbReference type="KEGG" id="sen:SACE_2145"/>
<dbReference type="eggNOG" id="COG0149">
    <property type="taxonomic scope" value="Bacteria"/>
</dbReference>
<dbReference type="HOGENOM" id="CLU_024251_2_3_11"/>
<dbReference type="OrthoDB" id="9809429at2"/>
<dbReference type="UniPathway" id="UPA00109">
    <property type="reaction ID" value="UER00189"/>
</dbReference>
<dbReference type="UniPathway" id="UPA00138"/>
<dbReference type="Proteomes" id="UP000006728">
    <property type="component" value="Chromosome"/>
</dbReference>
<dbReference type="GO" id="GO:0005829">
    <property type="term" value="C:cytosol"/>
    <property type="evidence" value="ECO:0007669"/>
    <property type="project" value="TreeGrafter"/>
</dbReference>
<dbReference type="GO" id="GO:0004807">
    <property type="term" value="F:triose-phosphate isomerase activity"/>
    <property type="evidence" value="ECO:0007669"/>
    <property type="project" value="UniProtKB-UniRule"/>
</dbReference>
<dbReference type="GO" id="GO:0006094">
    <property type="term" value="P:gluconeogenesis"/>
    <property type="evidence" value="ECO:0007669"/>
    <property type="project" value="UniProtKB-UniRule"/>
</dbReference>
<dbReference type="GO" id="GO:0046166">
    <property type="term" value="P:glyceraldehyde-3-phosphate biosynthetic process"/>
    <property type="evidence" value="ECO:0007669"/>
    <property type="project" value="TreeGrafter"/>
</dbReference>
<dbReference type="GO" id="GO:0019563">
    <property type="term" value="P:glycerol catabolic process"/>
    <property type="evidence" value="ECO:0007669"/>
    <property type="project" value="TreeGrafter"/>
</dbReference>
<dbReference type="GO" id="GO:0006096">
    <property type="term" value="P:glycolytic process"/>
    <property type="evidence" value="ECO:0007669"/>
    <property type="project" value="UniProtKB-UniRule"/>
</dbReference>
<dbReference type="CDD" id="cd00311">
    <property type="entry name" value="TIM"/>
    <property type="match status" value="1"/>
</dbReference>
<dbReference type="FunFam" id="3.20.20.70:FF:000020">
    <property type="entry name" value="Triosephosphate isomerase"/>
    <property type="match status" value="1"/>
</dbReference>
<dbReference type="Gene3D" id="3.20.20.70">
    <property type="entry name" value="Aldolase class I"/>
    <property type="match status" value="1"/>
</dbReference>
<dbReference type="HAMAP" id="MF_00147_B">
    <property type="entry name" value="TIM_B"/>
    <property type="match status" value="1"/>
</dbReference>
<dbReference type="InterPro" id="IPR013785">
    <property type="entry name" value="Aldolase_TIM"/>
</dbReference>
<dbReference type="InterPro" id="IPR035990">
    <property type="entry name" value="TIM_sf"/>
</dbReference>
<dbReference type="InterPro" id="IPR022896">
    <property type="entry name" value="TrioseP_Isoase_bac/euk"/>
</dbReference>
<dbReference type="InterPro" id="IPR000652">
    <property type="entry name" value="Triosephosphate_isomerase"/>
</dbReference>
<dbReference type="InterPro" id="IPR020861">
    <property type="entry name" value="Triosephosphate_isomerase_AS"/>
</dbReference>
<dbReference type="NCBIfam" id="TIGR00419">
    <property type="entry name" value="tim"/>
    <property type="match status" value="1"/>
</dbReference>
<dbReference type="PANTHER" id="PTHR21139">
    <property type="entry name" value="TRIOSEPHOSPHATE ISOMERASE"/>
    <property type="match status" value="1"/>
</dbReference>
<dbReference type="PANTHER" id="PTHR21139:SF42">
    <property type="entry name" value="TRIOSEPHOSPHATE ISOMERASE"/>
    <property type="match status" value="1"/>
</dbReference>
<dbReference type="Pfam" id="PF00121">
    <property type="entry name" value="TIM"/>
    <property type="match status" value="1"/>
</dbReference>
<dbReference type="SUPFAM" id="SSF51351">
    <property type="entry name" value="Triosephosphate isomerase (TIM)"/>
    <property type="match status" value="1"/>
</dbReference>
<dbReference type="PROSITE" id="PS00171">
    <property type="entry name" value="TIM_1"/>
    <property type="match status" value="1"/>
</dbReference>
<dbReference type="PROSITE" id="PS51440">
    <property type="entry name" value="TIM_2"/>
    <property type="match status" value="1"/>
</dbReference>
<keyword id="KW-0963">Cytoplasm</keyword>
<keyword id="KW-0312">Gluconeogenesis</keyword>
<keyword id="KW-0324">Glycolysis</keyword>
<keyword id="KW-0413">Isomerase</keyword>
<keyword id="KW-1185">Reference proteome</keyword>
<sequence length="261" mass="27808">MARQPLIAGNWKMNLNHLEAIALVQKIAFSLPEKYFAKVEVAVIPPFTDIRSVQTLIDGDKLLLKHGAQDVSEHESGAYTGEVSGPMLAKLGCSYVVVGHSERREHHAETDEVVNRKVRAVLKHGMSPILCVGEPLEVREAGGHVEHSTTQLINALKGLKTEQIRQVVVAYEPVWAIGTGKVATAADAQEVCAALRTALADKYGKEIADEVRVLYGGSVKSSNIGELIGQNDVDGALVGGASLNGDEFTKLSAMAAGGPLP</sequence>
<accession>A4FBM6</accession>